<reference key="1">
    <citation type="journal article" date="1995" name="Science">
        <title>The minimal gene complement of Mycoplasma genitalium.</title>
        <authorList>
            <person name="Fraser C.M."/>
            <person name="Gocayne J.D."/>
            <person name="White O."/>
            <person name="Adams M.D."/>
            <person name="Clayton R.A."/>
            <person name="Fleischmann R.D."/>
            <person name="Bult C.J."/>
            <person name="Kerlavage A.R."/>
            <person name="Sutton G.G."/>
            <person name="Kelley J.M."/>
            <person name="Fritchman J.L."/>
            <person name="Weidman J.F."/>
            <person name="Small K.V."/>
            <person name="Sandusky M."/>
            <person name="Fuhrmann J.L."/>
            <person name="Nguyen D.T."/>
            <person name="Utterback T.R."/>
            <person name="Saudek D.M."/>
            <person name="Phillips C.A."/>
            <person name="Merrick J.M."/>
            <person name="Tomb J.-F."/>
            <person name="Dougherty B.A."/>
            <person name="Bott K.F."/>
            <person name="Hu P.-C."/>
            <person name="Lucier T.S."/>
            <person name="Peterson S.N."/>
            <person name="Smith H.O."/>
            <person name="Hutchison C.A. III"/>
            <person name="Venter J.C."/>
        </authorList>
    </citation>
    <scope>NUCLEOTIDE SEQUENCE [LARGE SCALE GENOMIC DNA]</scope>
    <source>
        <strain>ATCC 33530 / DSM 19775 / NCTC 10195 / G37</strain>
    </source>
</reference>
<accession>P47589</accession>
<proteinExistence type="inferred from homology"/>
<keyword id="KW-0489">Methyltransferase</keyword>
<keyword id="KW-1185">Reference proteome</keyword>
<keyword id="KW-0949">S-adenosyl-L-methionine</keyword>
<keyword id="KW-0808">Transferase</keyword>
<keyword id="KW-0819">tRNA processing</keyword>
<sequence length="210" mass="24929">MRLRKVKNALLKINQSPYFYSKDKFAKFTKKQLVLELGCGKGTFLIKEAQKNNNFLFIGIEREPTIVLKAINKINKLDFNLENILLLCTDAKQLDDYFQAESVQKIFINFPDPWPKKRHIQRRLTSPDFLKLFWNLLVKNGLIEFKTDNDKLFEYTLTTLQENSQIFEIIHQITDLNNSEFSFQNSITEYEQRFMELEIPIKKLVIKKII</sequence>
<comment type="function">
    <text evidence="2">Catalyzes the formation of N(7)-methylguanine at position 46 (m7G46) in tRNA.</text>
</comment>
<comment type="catalytic activity">
    <reaction evidence="2">
        <text>guanosine(46) in tRNA + S-adenosyl-L-methionine = N(7)-methylguanosine(46) in tRNA + S-adenosyl-L-homocysteine</text>
        <dbReference type="Rhea" id="RHEA:42708"/>
        <dbReference type="Rhea" id="RHEA-COMP:10188"/>
        <dbReference type="Rhea" id="RHEA-COMP:10189"/>
        <dbReference type="ChEBI" id="CHEBI:57856"/>
        <dbReference type="ChEBI" id="CHEBI:59789"/>
        <dbReference type="ChEBI" id="CHEBI:74269"/>
        <dbReference type="ChEBI" id="CHEBI:74480"/>
        <dbReference type="EC" id="2.1.1.33"/>
    </reaction>
</comment>
<comment type="pathway">
    <text evidence="2">tRNA modification; N(7)-methylguanine-tRNA biosynthesis.</text>
</comment>
<comment type="similarity">
    <text evidence="2">Belongs to the class I-like SAM-binding methyltransferase superfamily. TrmB family.</text>
</comment>
<gene>
    <name evidence="2" type="primary">trmB</name>
    <name type="ordered locus">MG347</name>
</gene>
<name>TRMB_MYCGE</name>
<feature type="chain" id="PRO_0000171351" description="tRNA (guanine-N(7)-)-methyltransferase">
    <location>
        <begin position="1"/>
        <end position="210"/>
    </location>
</feature>
<feature type="active site" evidence="1">
    <location>
        <position position="112"/>
    </location>
</feature>
<feature type="binding site" evidence="2">
    <location>
        <position position="36"/>
    </location>
    <ligand>
        <name>S-adenosyl-L-methionine</name>
        <dbReference type="ChEBI" id="CHEBI:59789"/>
    </ligand>
</feature>
<feature type="binding site" evidence="2">
    <location>
        <position position="61"/>
    </location>
    <ligand>
        <name>S-adenosyl-L-methionine</name>
        <dbReference type="ChEBI" id="CHEBI:59789"/>
    </ligand>
</feature>
<feature type="binding site" evidence="2">
    <location>
        <position position="90"/>
    </location>
    <ligand>
        <name>S-adenosyl-L-methionine</name>
        <dbReference type="ChEBI" id="CHEBI:59789"/>
    </ligand>
</feature>
<feature type="binding site" evidence="2">
    <location>
        <position position="112"/>
    </location>
    <ligand>
        <name>S-adenosyl-L-methionine</name>
        <dbReference type="ChEBI" id="CHEBI:59789"/>
    </ligand>
</feature>
<feature type="binding site" evidence="2">
    <location>
        <position position="116"/>
    </location>
    <ligand>
        <name>substrate</name>
    </ligand>
</feature>
<feature type="binding site" evidence="2">
    <location>
        <position position="148"/>
    </location>
    <ligand>
        <name>substrate</name>
    </ligand>
</feature>
<feature type="binding site" evidence="2">
    <location>
        <begin position="188"/>
        <end position="191"/>
    </location>
    <ligand>
        <name>substrate</name>
    </ligand>
</feature>
<organism>
    <name type="scientific">Mycoplasma genitalium (strain ATCC 33530 / DSM 19775 / NCTC 10195 / G37)</name>
    <name type="common">Mycoplasmoides genitalium</name>
    <dbReference type="NCBI Taxonomy" id="243273"/>
    <lineage>
        <taxon>Bacteria</taxon>
        <taxon>Bacillati</taxon>
        <taxon>Mycoplasmatota</taxon>
        <taxon>Mycoplasmoidales</taxon>
        <taxon>Mycoplasmoidaceae</taxon>
        <taxon>Mycoplasmoides</taxon>
    </lineage>
</organism>
<dbReference type="EC" id="2.1.1.33" evidence="2"/>
<dbReference type="EMBL" id="L43967">
    <property type="protein sequence ID" value="AAC71572.1"/>
    <property type="molecule type" value="Genomic_DNA"/>
</dbReference>
<dbReference type="PIR" id="D64238">
    <property type="entry name" value="D64238"/>
</dbReference>
<dbReference type="RefSeq" id="WP_009885805.1">
    <property type="nucleotide sequence ID" value="NC_000908.2"/>
</dbReference>
<dbReference type="SMR" id="P47589"/>
<dbReference type="FunCoup" id="P47589">
    <property type="interactions" value="160"/>
</dbReference>
<dbReference type="STRING" id="243273.MG_347"/>
<dbReference type="GeneID" id="88282524"/>
<dbReference type="KEGG" id="mge:MG_347"/>
<dbReference type="eggNOG" id="COG0220">
    <property type="taxonomic scope" value="Bacteria"/>
</dbReference>
<dbReference type="HOGENOM" id="CLU_050910_2_1_14"/>
<dbReference type="InParanoid" id="P47589"/>
<dbReference type="OrthoDB" id="9802090at2"/>
<dbReference type="BioCyc" id="MGEN243273:G1GJ2-434-MONOMER"/>
<dbReference type="UniPathway" id="UPA00989"/>
<dbReference type="Proteomes" id="UP000000807">
    <property type="component" value="Chromosome"/>
</dbReference>
<dbReference type="GO" id="GO:0043527">
    <property type="term" value="C:tRNA methyltransferase complex"/>
    <property type="evidence" value="ECO:0000318"/>
    <property type="project" value="GO_Central"/>
</dbReference>
<dbReference type="GO" id="GO:0008176">
    <property type="term" value="F:tRNA (guanine(46)-N7)-methyltransferase activity"/>
    <property type="evidence" value="ECO:0000318"/>
    <property type="project" value="GO_Central"/>
</dbReference>
<dbReference type="GO" id="GO:0036265">
    <property type="term" value="P:RNA (guanine-N7)-methylation"/>
    <property type="evidence" value="ECO:0000318"/>
    <property type="project" value="GO_Central"/>
</dbReference>
<dbReference type="GO" id="GO:0030488">
    <property type="term" value="P:tRNA methylation"/>
    <property type="evidence" value="ECO:0000318"/>
    <property type="project" value="GO_Central"/>
</dbReference>
<dbReference type="CDD" id="cd02440">
    <property type="entry name" value="AdoMet_MTases"/>
    <property type="match status" value="1"/>
</dbReference>
<dbReference type="FunFam" id="3.40.50.150:FF:000035">
    <property type="entry name" value="tRNA (guanine-N(7)-)-methyltransferase"/>
    <property type="match status" value="1"/>
</dbReference>
<dbReference type="Gene3D" id="3.40.50.150">
    <property type="entry name" value="Vaccinia Virus protein VP39"/>
    <property type="match status" value="1"/>
</dbReference>
<dbReference type="HAMAP" id="MF_01057">
    <property type="entry name" value="tRNA_methyltr_TrmB"/>
    <property type="match status" value="1"/>
</dbReference>
<dbReference type="InterPro" id="IPR029063">
    <property type="entry name" value="SAM-dependent_MTases_sf"/>
</dbReference>
<dbReference type="InterPro" id="IPR003358">
    <property type="entry name" value="tRNA_(Gua-N-7)_MeTrfase_Trmb"/>
</dbReference>
<dbReference type="InterPro" id="IPR055361">
    <property type="entry name" value="tRNA_methyltr_TrmB_bact"/>
</dbReference>
<dbReference type="NCBIfam" id="NF001080">
    <property type="entry name" value="PRK00121.2-2"/>
    <property type="match status" value="1"/>
</dbReference>
<dbReference type="NCBIfam" id="TIGR00091">
    <property type="entry name" value="tRNA (guanosine(46)-N7)-methyltransferase TrmB"/>
    <property type="match status" value="1"/>
</dbReference>
<dbReference type="PANTHER" id="PTHR23417">
    <property type="entry name" value="3-DEOXY-D-MANNO-OCTULOSONIC-ACID TRANSFERASE/TRNA GUANINE-N 7 - -METHYLTRANSFERASE"/>
    <property type="match status" value="1"/>
</dbReference>
<dbReference type="PANTHER" id="PTHR23417:SF14">
    <property type="entry name" value="PENTACOTRIPEPTIDE-REPEAT REGION OF PRORP DOMAIN-CONTAINING PROTEIN"/>
    <property type="match status" value="1"/>
</dbReference>
<dbReference type="Pfam" id="PF02390">
    <property type="entry name" value="Methyltransf_4"/>
    <property type="match status" value="1"/>
</dbReference>
<dbReference type="SUPFAM" id="SSF53335">
    <property type="entry name" value="S-adenosyl-L-methionine-dependent methyltransferases"/>
    <property type="match status" value="1"/>
</dbReference>
<dbReference type="PROSITE" id="PS51625">
    <property type="entry name" value="SAM_MT_TRMB"/>
    <property type="match status" value="1"/>
</dbReference>
<evidence type="ECO:0000250" key="1"/>
<evidence type="ECO:0000255" key="2">
    <source>
        <dbReference type="HAMAP-Rule" id="MF_01057"/>
    </source>
</evidence>
<protein>
    <recommendedName>
        <fullName evidence="2">tRNA (guanine-N(7)-)-methyltransferase</fullName>
        <ecNumber evidence="2">2.1.1.33</ecNumber>
    </recommendedName>
    <alternativeName>
        <fullName evidence="2">tRNA (guanine(46)-N(7))-methyltransferase</fullName>
    </alternativeName>
    <alternativeName>
        <fullName evidence="2">tRNA(m7G46)-methyltransferase</fullName>
    </alternativeName>
</protein>